<proteinExistence type="inferred from homology"/>
<feature type="chain" id="PRO_0000411729" description="Vacuolar membrane protease">
    <location>
        <begin position="1"/>
        <end position="992"/>
    </location>
</feature>
<feature type="topological domain" description="Cytoplasmic" evidence="1">
    <location>
        <begin position="1"/>
        <end position="24"/>
    </location>
</feature>
<feature type="transmembrane region" description="Helical; Name=1" evidence="3">
    <location>
        <begin position="25"/>
        <end position="45"/>
    </location>
</feature>
<feature type="topological domain" description="Vacuolar" evidence="1">
    <location>
        <begin position="46"/>
        <end position="390"/>
    </location>
</feature>
<feature type="transmembrane region" description="Helical; Name=2" evidence="3">
    <location>
        <begin position="391"/>
        <end position="411"/>
    </location>
</feature>
<feature type="topological domain" description="Cytoplasmic" evidence="1">
    <location>
        <begin position="412"/>
        <end position="446"/>
    </location>
</feature>
<feature type="transmembrane region" description="Helical; Name=3" evidence="3">
    <location>
        <begin position="447"/>
        <end position="467"/>
    </location>
</feature>
<feature type="topological domain" description="Vacuolar" evidence="1">
    <location>
        <begin position="468"/>
        <end position="474"/>
    </location>
</feature>
<feature type="transmembrane region" description="Helical; Name=4" evidence="3">
    <location>
        <begin position="475"/>
        <end position="495"/>
    </location>
</feature>
<feature type="topological domain" description="Cytoplasmic" evidence="1">
    <location>
        <begin position="496"/>
        <end position="508"/>
    </location>
</feature>
<feature type="transmembrane region" description="Helical; Name=5" evidence="3">
    <location>
        <begin position="509"/>
        <end position="529"/>
    </location>
</feature>
<feature type="topological domain" description="Vacuolar" evidence="1">
    <location>
        <begin position="530"/>
        <end position="533"/>
    </location>
</feature>
<feature type="transmembrane region" description="Helical; Name=6" evidence="3">
    <location>
        <begin position="534"/>
        <end position="554"/>
    </location>
</feature>
<feature type="topological domain" description="Cytoplasmic" evidence="1">
    <location>
        <begin position="555"/>
        <end position="671"/>
    </location>
</feature>
<feature type="transmembrane region" description="Helical; Name=7" evidence="3">
    <location>
        <begin position="672"/>
        <end position="692"/>
    </location>
</feature>
<feature type="topological domain" description="Vacuolar" evidence="1">
    <location>
        <begin position="693"/>
        <end position="708"/>
    </location>
</feature>
<feature type="transmembrane region" description="Helical; Name=8" evidence="3">
    <location>
        <begin position="709"/>
        <end position="729"/>
    </location>
</feature>
<feature type="topological domain" description="Cytoplasmic" evidence="1">
    <location>
        <begin position="730"/>
        <end position="736"/>
    </location>
</feature>
<feature type="transmembrane region" description="Helical; Name=9" evidence="3">
    <location>
        <begin position="737"/>
        <end position="757"/>
    </location>
</feature>
<feature type="topological domain" description="Vacuolar" evidence="1">
    <location>
        <begin position="758"/>
        <end position="992"/>
    </location>
</feature>
<feature type="region of interest" description="Disordered" evidence="5">
    <location>
        <begin position="579"/>
        <end position="620"/>
    </location>
</feature>
<feature type="active site" description="Proton acceptor" evidence="2">
    <location>
        <position position="220"/>
    </location>
</feature>
<feature type="binding site" evidence="2">
    <location>
        <position position="174"/>
    </location>
    <ligand>
        <name>Zn(2+)</name>
        <dbReference type="ChEBI" id="CHEBI:29105"/>
        <label>1</label>
        <note>catalytic</note>
    </ligand>
</feature>
<feature type="binding site" evidence="2">
    <location>
        <position position="186"/>
    </location>
    <ligand>
        <name>Zn(2+)</name>
        <dbReference type="ChEBI" id="CHEBI:29105"/>
        <label>1</label>
        <note>catalytic</note>
    </ligand>
</feature>
<feature type="binding site" evidence="2">
    <location>
        <position position="186"/>
    </location>
    <ligand>
        <name>Zn(2+)</name>
        <dbReference type="ChEBI" id="CHEBI:29105"/>
        <label>2</label>
        <note>catalytic</note>
    </ligand>
</feature>
<feature type="binding site" evidence="2">
    <location>
        <position position="221"/>
    </location>
    <ligand>
        <name>Zn(2+)</name>
        <dbReference type="ChEBI" id="CHEBI:29105"/>
        <label>2</label>
        <note>catalytic</note>
    </ligand>
</feature>
<feature type="binding site" evidence="2">
    <location>
        <position position="246"/>
    </location>
    <ligand>
        <name>Zn(2+)</name>
        <dbReference type="ChEBI" id="CHEBI:29105"/>
        <label>1</label>
        <note>catalytic</note>
    </ligand>
</feature>
<feature type="binding site" evidence="2">
    <location>
        <position position="319"/>
    </location>
    <ligand>
        <name>Zn(2+)</name>
        <dbReference type="ChEBI" id="CHEBI:29105"/>
        <label>2</label>
        <note>catalytic</note>
    </ligand>
</feature>
<feature type="site" description="Transition state stabilizer" evidence="2">
    <location>
        <position position="318"/>
    </location>
</feature>
<feature type="glycosylation site" description="N-linked (GlcNAc...) asparagine" evidence="4">
    <location>
        <position position="59"/>
    </location>
</feature>
<feature type="glycosylation site" description="N-linked (GlcNAc...) asparagine" evidence="4">
    <location>
        <position position="115"/>
    </location>
</feature>
<feature type="glycosylation site" description="N-linked (GlcNAc...) asparagine" evidence="4">
    <location>
        <position position="118"/>
    </location>
</feature>
<feature type="glycosylation site" description="N-linked (GlcNAc...) asparagine" evidence="4">
    <location>
        <position position="237"/>
    </location>
</feature>
<feature type="glycosylation site" description="N-linked (GlcNAc...) asparagine" evidence="4">
    <location>
        <position position="805"/>
    </location>
</feature>
<feature type="glycosylation site" description="N-linked (GlcNAc...) asparagine" evidence="4">
    <location>
        <position position="846"/>
    </location>
</feature>
<feature type="glycosylation site" description="N-linked (GlcNAc...) asparagine" evidence="4">
    <location>
        <position position="954"/>
    </location>
</feature>
<dbReference type="EC" id="3.4.-.-" evidence="6"/>
<dbReference type="EMBL" id="KN275957">
    <property type="protein sequence ID" value="EEH44221.1"/>
    <property type="molecule type" value="Genomic_DNA"/>
</dbReference>
<dbReference type="RefSeq" id="XP_010756377.1">
    <property type="nucleotide sequence ID" value="XM_010758075.1"/>
</dbReference>
<dbReference type="SMR" id="C1G0X0"/>
<dbReference type="FunCoup" id="C1G0X0">
    <property type="interactions" value="4"/>
</dbReference>
<dbReference type="STRING" id="502780.C1G0X0"/>
<dbReference type="GeneID" id="22580340"/>
<dbReference type="KEGG" id="pbn:PADG_00510"/>
<dbReference type="VEuPathDB" id="FungiDB:PADG_00510"/>
<dbReference type="eggNOG" id="KOG2194">
    <property type="taxonomic scope" value="Eukaryota"/>
</dbReference>
<dbReference type="HOGENOM" id="CLU_006412_1_0_1"/>
<dbReference type="InParanoid" id="C1G0X0"/>
<dbReference type="OMA" id="TPWPVTI"/>
<dbReference type="OrthoDB" id="30877at33183"/>
<dbReference type="Proteomes" id="UP000001628">
    <property type="component" value="Unassembled WGS sequence"/>
</dbReference>
<dbReference type="GO" id="GO:0005774">
    <property type="term" value="C:vacuolar membrane"/>
    <property type="evidence" value="ECO:0007669"/>
    <property type="project" value="UniProtKB-SubCell"/>
</dbReference>
<dbReference type="GO" id="GO:0046872">
    <property type="term" value="F:metal ion binding"/>
    <property type="evidence" value="ECO:0007669"/>
    <property type="project" value="UniProtKB-KW"/>
</dbReference>
<dbReference type="GO" id="GO:0008235">
    <property type="term" value="F:metalloexopeptidase activity"/>
    <property type="evidence" value="ECO:0007669"/>
    <property type="project" value="InterPro"/>
</dbReference>
<dbReference type="GO" id="GO:0006508">
    <property type="term" value="P:proteolysis"/>
    <property type="evidence" value="ECO:0007669"/>
    <property type="project" value="UniProtKB-KW"/>
</dbReference>
<dbReference type="CDD" id="cd03875">
    <property type="entry name" value="M28_Fxna_like"/>
    <property type="match status" value="1"/>
</dbReference>
<dbReference type="FunFam" id="3.40.630.10:FF:000057">
    <property type="entry name" value="Vacuolar membrane protease"/>
    <property type="match status" value="1"/>
</dbReference>
<dbReference type="Gene3D" id="3.40.630.10">
    <property type="entry name" value="Zn peptidases"/>
    <property type="match status" value="1"/>
</dbReference>
<dbReference type="InterPro" id="IPR048024">
    <property type="entry name" value="Fxna-like_M28_dom"/>
</dbReference>
<dbReference type="InterPro" id="IPR045175">
    <property type="entry name" value="M28_fam"/>
</dbReference>
<dbReference type="InterPro" id="IPR007484">
    <property type="entry name" value="Peptidase_M28"/>
</dbReference>
<dbReference type="InterPro" id="IPR053975">
    <property type="entry name" value="PFF1_C"/>
</dbReference>
<dbReference type="InterPro" id="IPR053976">
    <property type="entry name" value="PFF1_TM"/>
</dbReference>
<dbReference type="PANTHER" id="PTHR12147">
    <property type="entry name" value="METALLOPEPTIDASE M28 FAMILY MEMBER"/>
    <property type="match status" value="1"/>
</dbReference>
<dbReference type="PANTHER" id="PTHR12147:SF58">
    <property type="entry name" value="VACUOLAR MEMBRANE PROTEASE"/>
    <property type="match status" value="1"/>
</dbReference>
<dbReference type="Pfam" id="PF04389">
    <property type="entry name" value="Peptidase_M28"/>
    <property type="match status" value="1"/>
</dbReference>
<dbReference type="Pfam" id="PF22250">
    <property type="entry name" value="PFF1_C"/>
    <property type="match status" value="1"/>
</dbReference>
<dbReference type="Pfam" id="PF22251">
    <property type="entry name" value="PFF1_TM"/>
    <property type="match status" value="1"/>
</dbReference>
<dbReference type="SUPFAM" id="SSF53187">
    <property type="entry name" value="Zn-dependent exopeptidases"/>
    <property type="match status" value="1"/>
</dbReference>
<keyword id="KW-0325">Glycoprotein</keyword>
<keyword id="KW-0378">Hydrolase</keyword>
<keyword id="KW-0472">Membrane</keyword>
<keyword id="KW-0479">Metal-binding</keyword>
<keyword id="KW-0482">Metalloprotease</keyword>
<keyword id="KW-0645">Protease</keyword>
<keyword id="KW-1185">Reference proteome</keyword>
<keyword id="KW-0812">Transmembrane</keyword>
<keyword id="KW-1133">Transmembrane helix</keyword>
<keyword id="KW-0926">Vacuole</keyword>
<keyword id="KW-0862">Zinc</keyword>
<accession>C1G0X0</accession>
<comment type="function">
    <text evidence="1">May be involved in vacuolar sorting and osmoregulation.</text>
</comment>
<comment type="cofactor">
    <cofactor evidence="2">
        <name>Zn(2+)</name>
        <dbReference type="ChEBI" id="CHEBI:29105"/>
    </cofactor>
    <text evidence="2">Binds 2 Zn(2+) ions per subunit.</text>
</comment>
<comment type="subcellular location">
    <subcellularLocation>
        <location evidence="1">Vacuole membrane</location>
        <topology evidence="3">Multi-pass membrane protein</topology>
    </subcellularLocation>
</comment>
<comment type="similarity">
    <text evidence="6">Belongs to the peptidase M28 family.</text>
</comment>
<evidence type="ECO:0000250" key="1">
    <source>
        <dbReference type="UniProtKB" id="P38244"/>
    </source>
</evidence>
<evidence type="ECO:0000250" key="2">
    <source>
        <dbReference type="UniProtKB" id="P80561"/>
    </source>
</evidence>
<evidence type="ECO:0000255" key="3"/>
<evidence type="ECO:0000255" key="4">
    <source>
        <dbReference type="PROSITE-ProRule" id="PRU00498"/>
    </source>
</evidence>
<evidence type="ECO:0000256" key="5">
    <source>
        <dbReference type="SAM" id="MobiDB-lite"/>
    </source>
</evidence>
<evidence type="ECO:0000305" key="6"/>
<gene>
    <name type="ORF">PADG_00510</name>
</gene>
<reference key="1">
    <citation type="journal article" date="2011" name="PLoS Genet.">
        <title>Comparative genomic analysis of human fungal pathogens causing paracoccidioidomycosis.</title>
        <authorList>
            <person name="Desjardins C.A."/>
            <person name="Champion M.D."/>
            <person name="Holder J.W."/>
            <person name="Muszewska A."/>
            <person name="Goldberg J."/>
            <person name="Bailao A.M."/>
            <person name="Brigido M.M."/>
            <person name="Ferreira M.E."/>
            <person name="Garcia A.M."/>
            <person name="Grynberg M."/>
            <person name="Gujja S."/>
            <person name="Heiman D.I."/>
            <person name="Henn M.R."/>
            <person name="Kodira C.D."/>
            <person name="Leon-Narvaez H."/>
            <person name="Longo L.V.G."/>
            <person name="Ma L.-J."/>
            <person name="Malavazi I."/>
            <person name="Matsuo A.L."/>
            <person name="Morais F.V."/>
            <person name="Pereira M."/>
            <person name="Rodriguez-Brito S."/>
            <person name="Sakthikumar S."/>
            <person name="Salem-Izacc S.M."/>
            <person name="Sykes S.M."/>
            <person name="Teixeira M.M."/>
            <person name="Vallejo M.C."/>
            <person name="Walter M.E."/>
            <person name="Yandava C."/>
            <person name="Young S."/>
            <person name="Zeng Q."/>
            <person name="Zucker J."/>
            <person name="Felipe M.S."/>
            <person name="Goldman G.H."/>
            <person name="Haas B.J."/>
            <person name="McEwen J.G."/>
            <person name="Nino-Vega G."/>
            <person name="Puccia R."/>
            <person name="San-Blas G."/>
            <person name="Soares C.M."/>
            <person name="Birren B.W."/>
            <person name="Cuomo C.A."/>
        </authorList>
    </citation>
    <scope>NUCLEOTIDE SEQUENCE [LARGE SCALE GENOMIC DNA]</scope>
    <source>
        <strain>Pb18</strain>
    </source>
</reference>
<name>PFF1_PARBD</name>
<organism>
    <name type="scientific">Paracoccidioides brasiliensis (strain Pb18)</name>
    <dbReference type="NCBI Taxonomy" id="502780"/>
    <lineage>
        <taxon>Eukaryota</taxon>
        <taxon>Fungi</taxon>
        <taxon>Dikarya</taxon>
        <taxon>Ascomycota</taxon>
        <taxon>Pezizomycotina</taxon>
        <taxon>Eurotiomycetes</taxon>
        <taxon>Eurotiomycetidae</taxon>
        <taxon>Onygenales</taxon>
        <taxon>Ajellomycetaceae</taxon>
        <taxon>Paracoccidioides</taxon>
    </lineage>
</organism>
<protein>
    <recommendedName>
        <fullName evidence="1">Vacuolar membrane protease</fullName>
        <ecNumber evidence="6">3.4.-.-</ecNumber>
    </recommendedName>
    <alternativeName>
        <fullName evidence="1">FXNA-related family protease 1</fullName>
    </alternativeName>
</protein>
<sequence length="992" mass="110052">MSPAMANPRVRKFNPIAFTPLPVTFITTIVYLAVLILVLVTYLVVPPAPTLEMSPKGVNLTEAWRDLQHLTEGFHPYNSRRNDDVHAWLLHRIEAIVRESAAADGGPEVFVFDDNLSNLTYSNGGVSKSPIVGVYFESTNIIVYIRGSEDDPQNWWEWSNGKPKGKGGVLVNAHYDSVSTGYGATDDGMGVVSLLQLLRYFTTAGNKPRKGLVLLFNNGEEDYLNGARVYSQHAMSNFTHTFLNLEGAGAGGRACLFRSTDTEVTRFYKNAKHPFGSVLAGDGFKLGLIRSQTDYVVFNGVLGLRGLDVSFIAPRSRYHTDQDDARHTNVDSLWHMLSVAIGTTEGLVSYTGTDFDSKTTDQDKVNSGGGTLGVWFDIFGSAFAVFRLHTLFALSVTLLVIGPLVLFITSIALSKTDRMYLFSMSKSLGGASETVSLRGLRGLFRTPIILTVTTVISIGLAYLLEKINPYIVHSSQFAVWSMMLSVWIFVAWFLARVADFFRPSALHRAYSYTWIFIVTWIMLVISTVYANQKGIAAGYFTFFYFAAVFLATWVSYLELFSLPRKGYYARQASRRQRRRSSSLSSRLLTPSADELPSDIGPNGAENVGDPDETDPTESTSLLRGQRTTFANYRTGGDDGVTEYTAEDEHVREASIFGHEQSWSWTLPRWTWILQLLLLAPIVIILVGQVGLLLTTAMSQIGSDGVSTFIVYLACALFSTLLFAPLLPFIHRFTYHVPIFLLLIFIGTLIYNLVAFPFSPANRLKIFFIQEVNLDDGTNKVSLTGIQPYLTDTINAIPSAAGQTANCTQGPFGSLVRCSWSGLPPRVVKEDPGNDQTMGPYTWISYNITRTVGKNEARIKVSGRNTRACKLKFDNPVADYRISGSAVDHRLPHTSRQGVEEIRLWTRTWENTWVVDVDWHSNPVNPGESKDGDEKQDVSKNELSGKVICLWSDNNESGVIPALDEVRLYAPAWVAISKSADGLVEASHDFIIQ</sequence>